<gene>
    <name evidence="1" type="primary">aat</name>
    <name type="ordered locus">Bphyt_1732</name>
</gene>
<evidence type="ECO:0000255" key="1">
    <source>
        <dbReference type="HAMAP-Rule" id="MF_00688"/>
    </source>
</evidence>
<proteinExistence type="inferred from homology"/>
<name>LFTR_PARPJ</name>
<organism>
    <name type="scientific">Paraburkholderia phytofirmans (strain DSM 17436 / LMG 22146 / PsJN)</name>
    <name type="common">Burkholderia phytofirmans</name>
    <dbReference type="NCBI Taxonomy" id="398527"/>
    <lineage>
        <taxon>Bacteria</taxon>
        <taxon>Pseudomonadati</taxon>
        <taxon>Pseudomonadota</taxon>
        <taxon>Betaproteobacteria</taxon>
        <taxon>Burkholderiales</taxon>
        <taxon>Burkholderiaceae</taxon>
        <taxon>Paraburkholderia</taxon>
    </lineage>
</organism>
<dbReference type="EC" id="2.3.2.6" evidence="1"/>
<dbReference type="EMBL" id="CP001052">
    <property type="protein sequence ID" value="ACD16140.1"/>
    <property type="molecule type" value="Genomic_DNA"/>
</dbReference>
<dbReference type="RefSeq" id="WP_012432749.1">
    <property type="nucleotide sequence ID" value="NC_010681.1"/>
</dbReference>
<dbReference type="SMR" id="B2T3H9"/>
<dbReference type="STRING" id="398527.Bphyt_1732"/>
<dbReference type="KEGG" id="bpy:Bphyt_1732"/>
<dbReference type="eggNOG" id="COG2360">
    <property type="taxonomic scope" value="Bacteria"/>
</dbReference>
<dbReference type="HOGENOM" id="CLU_075045_0_0_4"/>
<dbReference type="OrthoDB" id="9790282at2"/>
<dbReference type="Proteomes" id="UP000001739">
    <property type="component" value="Chromosome 1"/>
</dbReference>
<dbReference type="GO" id="GO:0005737">
    <property type="term" value="C:cytoplasm"/>
    <property type="evidence" value="ECO:0007669"/>
    <property type="project" value="UniProtKB-SubCell"/>
</dbReference>
<dbReference type="GO" id="GO:0008914">
    <property type="term" value="F:leucyl-tRNA--protein transferase activity"/>
    <property type="evidence" value="ECO:0007669"/>
    <property type="project" value="UniProtKB-UniRule"/>
</dbReference>
<dbReference type="GO" id="GO:0030163">
    <property type="term" value="P:protein catabolic process"/>
    <property type="evidence" value="ECO:0007669"/>
    <property type="project" value="UniProtKB-UniRule"/>
</dbReference>
<dbReference type="Gene3D" id="3.40.630.70">
    <property type="entry name" value="Leucyl/phenylalanyl-tRNA-protein transferase, C-terminal domain"/>
    <property type="match status" value="1"/>
</dbReference>
<dbReference type="Gene3D" id="3.30.70.3550">
    <property type="entry name" value="Leucyl/phenylalanyl-tRNA-protein transferase, N-terminal domain"/>
    <property type="match status" value="1"/>
</dbReference>
<dbReference type="HAMAP" id="MF_00688">
    <property type="entry name" value="Leu_Phe_trans"/>
    <property type="match status" value="1"/>
</dbReference>
<dbReference type="InterPro" id="IPR016181">
    <property type="entry name" value="Acyl_CoA_acyltransferase"/>
</dbReference>
<dbReference type="InterPro" id="IPR004616">
    <property type="entry name" value="Leu/Phe-tRNA_Trfase"/>
</dbReference>
<dbReference type="InterPro" id="IPR042203">
    <property type="entry name" value="Leu/Phe-tRNA_Trfase_C"/>
</dbReference>
<dbReference type="InterPro" id="IPR042221">
    <property type="entry name" value="Leu/Phe-tRNA_Trfase_N"/>
</dbReference>
<dbReference type="NCBIfam" id="TIGR00667">
    <property type="entry name" value="aat"/>
    <property type="match status" value="1"/>
</dbReference>
<dbReference type="PANTHER" id="PTHR30098">
    <property type="entry name" value="LEUCYL/PHENYLALANYL-TRNA--PROTEIN TRANSFERASE"/>
    <property type="match status" value="1"/>
</dbReference>
<dbReference type="PANTHER" id="PTHR30098:SF2">
    <property type="entry name" value="LEUCYL_PHENYLALANYL-TRNA--PROTEIN TRANSFERASE"/>
    <property type="match status" value="1"/>
</dbReference>
<dbReference type="Pfam" id="PF03588">
    <property type="entry name" value="Leu_Phe_trans"/>
    <property type="match status" value="1"/>
</dbReference>
<dbReference type="SUPFAM" id="SSF55729">
    <property type="entry name" value="Acyl-CoA N-acyltransferases (Nat)"/>
    <property type="match status" value="1"/>
</dbReference>
<sequence length="245" mass="27218">MVPWLGPDDPFPPVERALGATSGAPGLLAASGDLLPSRLIDAYRRGIFPWYSDGQPVLWWSPDPRMVLRPAEFKVAPSLRKTLRRVLREDAWEIRVDHDFASVMRACAQAPRRGQRGTWITADVVEAYSSLHRVGDAHSIETWFEGKRVGGLYGVSFGKMFFGESMFAEVTDASKMALAALVGHLRRHEIEMIDCQQNTSHLASLGGREITRKSFIAHVRASVEAPPIPWRFDKTALLEVVAPAS</sequence>
<accession>B2T3H9</accession>
<protein>
    <recommendedName>
        <fullName evidence="1">Leucyl/phenylalanyl-tRNA--protein transferase</fullName>
        <ecNumber evidence="1">2.3.2.6</ecNumber>
    </recommendedName>
    <alternativeName>
        <fullName evidence="1">L/F-transferase</fullName>
    </alternativeName>
    <alternativeName>
        <fullName evidence="1">Leucyltransferase</fullName>
    </alternativeName>
    <alternativeName>
        <fullName evidence="1">Phenyalanyltransferase</fullName>
    </alternativeName>
</protein>
<feature type="chain" id="PRO_1000131911" description="Leucyl/phenylalanyl-tRNA--protein transferase">
    <location>
        <begin position="1"/>
        <end position="245"/>
    </location>
</feature>
<reference key="1">
    <citation type="journal article" date="2011" name="J. Bacteriol.">
        <title>Complete genome sequence of the plant growth-promoting endophyte Burkholderia phytofirmans strain PsJN.</title>
        <authorList>
            <person name="Weilharter A."/>
            <person name="Mitter B."/>
            <person name="Shin M.V."/>
            <person name="Chain P.S."/>
            <person name="Nowak J."/>
            <person name="Sessitsch A."/>
        </authorList>
    </citation>
    <scope>NUCLEOTIDE SEQUENCE [LARGE SCALE GENOMIC DNA]</scope>
    <source>
        <strain>DSM 17436 / LMG 22146 / PsJN</strain>
    </source>
</reference>
<comment type="function">
    <text evidence="1">Functions in the N-end rule pathway of protein degradation where it conjugates Leu, Phe and, less efficiently, Met from aminoacyl-tRNAs to the N-termini of proteins containing an N-terminal arginine or lysine.</text>
</comment>
<comment type="catalytic activity">
    <reaction evidence="1">
        <text>N-terminal L-lysyl-[protein] + L-leucyl-tRNA(Leu) = N-terminal L-leucyl-L-lysyl-[protein] + tRNA(Leu) + H(+)</text>
        <dbReference type="Rhea" id="RHEA:12340"/>
        <dbReference type="Rhea" id="RHEA-COMP:9613"/>
        <dbReference type="Rhea" id="RHEA-COMP:9622"/>
        <dbReference type="Rhea" id="RHEA-COMP:12670"/>
        <dbReference type="Rhea" id="RHEA-COMP:12671"/>
        <dbReference type="ChEBI" id="CHEBI:15378"/>
        <dbReference type="ChEBI" id="CHEBI:65249"/>
        <dbReference type="ChEBI" id="CHEBI:78442"/>
        <dbReference type="ChEBI" id="CHEBI:78494"/>
        <dbReference type="ChEBI" id="CHEBI:133043"/>
        <dbReference type="EC" id="2.3.2.6"/>
    </reaction>
</comment>
<comment type="catalytic activity">
    <reaction evidence="1">
        <text>N-terminal L-arginyl-[protein] + L-leucyl-tRNA(Leu) = N-terminal L-leucyl-L-arginyl-[protein] + tRNA(Leu) + H(+)</text>
        <dbReference type="Rhea" id="RHEA:50416"/>
        <dbReference type="Rhea" id="RHEA-COMP:9613"/>
        <dbReference type="Rhea" id="RHEA-COMP:9622"/>
        <dbReference type="Rhea" id="RHEA-COMP:12672"/>
        <dbReference type="Rhea" id="RHEA-COMP:12673"/>
        <dbReference type="ChEBI" id="CHEBI:15378"/>
        <dbReference type="ChEBI" id="CHEBI:64719"/>
        <dbReference type="ChEBI" id="CHEBI:78442"/>
        <dbReference type="ChEBI" id="CHEBI:78494"/>
        <dbReference type="ChEBI" id="CHEBI:133044"/>
        <dbReference type="EC" id="2.3.2.6"/>
    </reaction>
</comment>
<comment type="catalytic activity">
    <reaction evidence="1">
        <text>L-phenylalanyl-tRNA(Phe) + an N-terminal L-alpha-aminoacyl-[protein] = an N-terminal L-phenylalanyl-L-alpha-aminoacyl-[protein] + tRNA(Phe)</text>
        <dbReference type="Rhea" id="RHEA:43632"/>
        <dbReference type="Rhea" id="RHEA-COMP:9668"/>
        <dbReference type="Rhea" id="RHEA-COMP:9699"/>
        <dbReference type="Rhea" id="RHEA-COMP:10636"/>
        <dbReference type="Rhea" id="RHEA-COMP:10637"/>
        <dbReference type="ChEBI" id="CHEBI:78442"/>
        <dbReference type="ChEBI" id="CHEBI:78531"/>
        <dbReference type="ChEBI" id="CHEBI:78597"/>
        <dbReference type="ChEBI" id="CHEBI:83561"/>
        <dbReference type="EC" id="2.3.2.6"/>
    </reaction>
</comment>
<comment type="subcellular location">
    <subcellularLocation>
        <location evidence="1">Cytoplasm</location>
    </subcellularLocation>
</comment>
<comment type="similarity">
    <text evidence="1">Belongs to the L/F-transferase family.</text>
</comment>
<keyword id="KW-0012">Acyltransferase</keyword>
<keyword id="KW-0963">Cytoplasm</keyword>
<keyword id="KW-0808">Transferase</keyword>